<keyword id="KW-1185">Reference proteome</keyword>
<accession>Q2NFG2</accession>
<feature type="chain" id="PRO_0000340170" description="Sugar fermentation stimulation protein homolog">
    <location>
        <begin position="1"/>
        <end position="242"/>
    </location>
</feature>
<organism>
    <name type="scientific">Methanosphaera stadtmanae (strain ATCC 43021 / DSM 3091 / JCM 11832 / MCB-3)</name>
    <dbReference type="NCBI Taxonomy" id="339860"/>
    <lineage>
        <taxon>Archaea</taxon>
        <taxon>Methanobacteriati</taxon>
        <taxon>Methanobacteriota</taxon>
        <taxon>Methanomada group</taxon>
        <taxon>Methanobacteria</taxon>
        <taxon>Methanobacteriales</taxon>
        <taxon>Methanobacteriaceae</taxon>
        <taxon>Methanosphaera</taxon>
    </lineage>
</organism>
<dbReference type="EMBL" id="CP000102">
    <property type="protein sequence ID" value="ABC57441.1"/>
    <property type="molecule type" value="Genomic_DNA"/>
</dbReference>
<dbReference type="RefSeq" id="WP_011406640.1">
    <property type="nucleotide sequence ID" value="NC_007681.1"/>
</dbReference>
<dbReference type="SMR" id="Q2NFG2"/>
<dbReference type="STRING" id="339860.Msp_1057"/>
<dbReference type="GeneID" id="41325626"/>
<dbReference type="KEGG" id="mst:Msp_1057"/>
<dbReference type="eggNOG" id="arCOG04115">
    <property type="taxonomic scope" value="Archaea"/>
</dbReference>
<dbReference type="HOGENOM" id="CLU_052299_1_0_2"/>
<dbReference type="OrthoDB" id="34139at2157"/>
<dbReference type="Proteomes" id="UP000001931">
    <property type="component" value="Chromosome"/>
</dbReference>
<dbReference type="GO" id="GO:0003677">
    <property type="term" value="F:DNA binding"/>
    <property type="evidence" value="ECO:0007669"/>
    <property type="project" value="InterPro"/>
</dbReference>
<dbReference type="CDD" id="cd22359">
    <property type="entry name" value="SfsA-like_bacterial"/>
    <property type="match status" value="1"/>
</dbReference>
<dbReference type="Gene3D" id="2.40.50.580">
    <property type="match status" value="1"/>
</dbReference>
<dbReference type="Gene3D" id="3.40.1350.60">
    <property type="match status" value="1"/>
</dbReference>
<dbReference type="HAMAP" id="MF_00095">
    <property type="entry name" value="SfsA"/>
    <property type="match status" value="1"/>
</dbReference>
<dbReference type="InterPro" id="IPR005224">
    <property type="entry name" value="SfsA"/>
</dbReference>
<dbReference type="InterPro" id="IPR040452">
    <property type="entry name" value="SfsA_C"/>
</dbReference>
<dbReference type="InterPro" id="IPR041465">
    <property type="entry name" value="SfsA_N"/>
</dbReference>
<dbReference type="NCBIfam" id="TIGR00230">
    <property type="entry name" value="sfsA"/>
    <property type="match status" value="1"/>
</dbReference>
<dbReference type="PANTHER" id="PTHR30545">
    <property type="entry name" value="SUGAR FERMENTATION STIMULATION PROTEIN A"/>
    <property type="match status" value="1"/>
</dbReference>
<dbReference type="PANTHER" id="PTHR30545:SF2">
    <property type="entry name" value="SUGAR FERMENTATION STIMULATION PROTEIN A"/>
    <property type="match status" value="1"/>
</dbReference>
<dbReference type="Pfam" id="PF03749">
    <property type="entry name" value="SfsA"/>
    <property type="match status" value="1"/>
</dbReference>
<dbReference type="Pfam" id="PF17746">
    <property type="entry name" value="SfsA_N"/>
    <property type="match status" value="1"/>
</dbReference>
<sequence>MIIDNLTIGKYISRPNRFTIEFKDKDKAITLAHLHDPGRLKELLIPNTDVLLKYINTYKETGRKTKYDVIAIKNKNNWILLNSSYHNKLVEELINTKEINSLENFHIDKPEIKYKNSRIDFLLKDDKNNPLYLEVKGCTLVEDTTAKFPDAPTKRGKKHVEELMEIHEKGIFTMVLILVLHNDADEFKPNYDTDIDFSQTLHEAYISGVKIYPLKINTELKNNSIILKKDRILSIKFKERNK</sequence>
<reference key="1">
    <citation type="journal article" date="2006" name="J. Bacteriol.">
        <title>The genome sequence of Methanosphaera stadtmanae reveals why this human intestinal archaeon is restricted to methanol and H2 for methane formation and ATP synthesis.</title>
        <authorList>
            <person name="Fricke W.F."/>
            <person name="Seedorf H."/>
            <person name="Henne A."/>
            <person name="Kruer M."/>
            <person name="Liesegang H."/>
            <person name="Hedderich R."/>
            <person name="Gottschalk G."/>
            <person name="Thauer R.K."/>
        </authorList>
    </citation>
    <scope>NUCLEOTIDE SEQUENCE [LARGE SCALE GENOMIC DNA]</scope>
    <source>
        <strain>ATCC 43021 / DSM 3091 / JCM 11832 / MCB-3</strain>
    </source>
</reference>
<gene>
    <name evidence="1" type="primary">sfsA</name>
    <name type="ordered locus">Msp_1057</name>
</gene>
<proteinExistence type="inferred from homology"/>
<comment type="similarity">
    <text evidence="1">Belongs to the SfsA family.</text>
</comment>
<evidence type="ECO:0000255" key="1">
    <source>
        <dbReference type="HAMAP-Rule" id="MF_00095"/>
    </source>
</evidence>
<name>SFSA_METST</name>
<protein>
    <recommendedName>
        <fullName evidence="1">Sugar fermentation stimulation protein homolog</fullName>
    </recommendedName>
</protein>